<gene>
    <name type="primary">shh</name>
</gene>
<proteinExistence type="inferred from homology"/>
<reference key="1">
    <citation type="journal article" date="1996" name="Proc. Natl. Acad. Sci. U.S.A.">
        <title>Evolutionary analyses of hedgehog and Hoxd-10 genes in fish species closely related to the zebrafish.</title>
        <authorList>
            <person name="Zardoya R."/>
            <person name="Abouheif E."/>
            <person name="Meyer A."/>
        </authorList>
    </citation>
    <scope>NUCLEOTIDE SEQUENCE [GENOMIC DNA]</scope>
    <source>
        <tissue>Muscle</tissue>
    </source>
</reference>
<feature type="chain" id="PRO_0000058736" description="Sonic hedgehog protein">
    <location>
        <begin position="1" status="less than"/>
        <end position="121" status="greater than"/>
    </location>
</feature>
<feature type="binding site" evidence="2">
    <location>
        <position position="60"/>
    </location>
    <ligand>
        <name>Ca(2+)</name>
        <dbReference type="ChEBI" id="CHEBI:29108"/>
        <label>1</label>
    </ligand>
</feature>
<feature type="binding site" evidence="2">
    <location>
        <position position="61"/>
    </location>
    <ligand>
        <name>Ca(2+)</name>
        <dbReference type="ChEBI" id="CHEBI:29108"/>
        <label>1</label>
    </ligand>
</feature>
<feature type="binding site" evidence="2">
    <location>
        <position position="61"/>
    </location>
    <ligand>
        <name>Ca(2+)</name>
        <dbReference type="ChEBI" id="CHEBI:29108"/>
        <label>2</label>
    </ligand>
</feature>
<feature type="binding site" evidence="2">
    <location>
        <position position="76"/>
    </location>
    <ligand>
        <name>Ca(2+)</name>
        <dbReference type="ChEBI" id="CHEBI:29108"/>
        <label>1</label>
    </ligand>
</feature>
<feature type="binding site" evidence="2">
    <location>
        <position position="77"/>
    </location>
    <ligand>
        <name>Ca(2+)</name>
        <dbReference type="ChEBI" id="CHEBI:29108"/>
        <label>1</label>
    </ligand>
</feature>
<feature type="binding site" evidence="2">
    <location>
        <position position="77"/>
    </location>
    <ligand>
        <name>Ca(2+)</name>
        <dbReference type="ChEBI" id="CHEBI:29108"/>
        <label>2</label>
    </ligand>
</feature>
<feature type="binding site" evidence="2">
    <location>
        <position position="80"/>
    </location>
    <ligand>
        <name>Ca(2+)</name>
        <dbReference type="ChEBI" id="CHEBI:29108"/>
        <label>2</label>
    </ligand>
</feature>
<feature type="binding site" evidence="2">
    <location>
        <position position="82"/>
    </location>
    <ligand>
        <name>Ca(2+)</name>
        <dbReference type="ChEBI" id="CHEBI:29108"/>
        <label>2</label>
    </ligand>
</feature>
<feature type="binding site" evidence="2">
    <location>
        <position position="91"/>
    </location>
    <ligand>
        <name>Zn(2+)</name>
        <dbReference type="ChEBI" id="CHEBI:29105"/>
    </ligand>
</feature>
<feature type="binding site" evidence="2">
    <location>
        <position position="98"/>
    </location>
    <ligand>
        <name>Zn(2+)</name>
        <dbReference type="ChEBI" id="CHEBI:29105"/>
    </ligand>
</feature>
<feature type="non-consecutive residues" evidence="3">
    <location>
        <begin position="63"/>
        <end position="64"/>
    </location>
</feature>
<feature type="non-terminal residue">
    <location>
        <position position="1"/>
    </location>
</feature>
<feature type="non-terminal residue">
    <location>
        <position position="121"/>
    </location>
</feature>
<evidence type="ECO:0000250" key="1"/>
<evidence type="ECO:0000250" key="2">
    <source>
        <dbReference type="UniProtKB" id="Q15465"/>
    </source>
</evidence>
<evidence type="ECO:0000305" key="3"/>
<keyword id="KW-0068">Autocatalytic cleavage</keyword>
<keyword id="KW-0106">Calcium</keyword>
<keyword id="KW-1003">Cell membrane</keyword>
<keyword id="KW-0217">Developmental protein</keyword>
<keyword id="KW-0378">Hydrolase</keyword>
<keyword id="KW-0449">Lipoprotein</keyword>
<keyword id="KW-0472">Membrane</keyword>
<keyword id="KW-0479">Metal-binding</keyword>
<keyword id="KW-0564">Palmitate</keyword>
<keyword id="KW-0645">Protease</keyword>
<keyword id="KW-0964">Secreted</keyword>
<keyword id="KW-0862">Zinc</keyword>
<protein>
    <recommendedName>
        <fullName>Sonic hedgehog protein</fullName>
        <shortName>SHH</shortName>
    </recommendedName>
</protein>
<accession>P79864</accession>
<accession>P79865</accession>
<organism>
    <name type="scientific">Trigonostigma heteromorpha</name>
    <name type="common">Harlequin rasbora</name>
    <name type="synonym">Rasbora heteromorpha</name>
    <dbReference type="NCBI Taxonomy" id="432397"/>
    <lineage>
        <taxon>Eukaryota</taxon>
        <taxon>Metazoa</taxon>
        <taxon>Chordata</taxon>
        <taxon>Craniata</taxon>
        <taxon>Vertebrata</taxon>
        <taxon>Euteleostomi</taxon>
        <taxon>Actinopterygii</taxon>
        <taxon>Neopterygii</taxon>
        <taxon>Teleostei</taxon>
        <taxon>Ostariophysi</taxon>
        <taxon>Cypriniformes</taxon>
        <taxon>Danionidae</taxon>
        <taxon>Rasborinae</taxon>
        <taxon>Trigonostigma</taxon>
    </lineage>
</organism>
<name>SHH_TRIHE</name>
<sequence length="121" mass="13940">YGKRRHPKKLTPLAYKQFIPNVAEKTLGASGRYEGKITRNSERFKELTPNYNPDIIFKDEENTVMNQWPGVKLRVTEGWDEDGHHLEESLHYKGRAVDITTSDRDKSKYGTLSRLAVEAGF</sequence>
<dbReference type="EMBL" id="U51354">
    <property type="protein sequence ID" value="AAB38579.1"/>
    <property type="molecule type" value="Genomic_DNA"/>
</dbReference>
<dbReference type="EMBL" id="U51372">
    <property type="protein sequence ID" value="AAB38598.1"/>
    <property type="molecule type" value="Genomic_DNA"/>
</dbReference>
<dbReference type="SMR" id="P79864"/>
<dbReference type="GO" id="GO:0005615">
    <property type="term" value="C:extracellular space"/>
    <property type="evidence" value="ECO:0007669"/>
    <property type="project" value="TreeGrafter"/>
</dbReference>
<dbReference type="GO" id="GO:0005886">
    <property type="term" value="C:plasma membrane"/>
    <property type="evidence" value="ECO:0007669"/>
    <property type="project" value="UniProtKB-SubCell"/>
</dbReference>
<dbReference type="GO" id="GO:0005509">
    <property type="term" value="F:calcium ion binding"/>
    <property type="evidence" value="ECO:0007669"/>
    <property type="project" value="TreeGrafter"/>
</dbReference>
<dbReference type="GO" id="GO:0005113">
    <property type="term" value="F:patched binding"/>
    <property type="evidence" value="ECO:0007669"/>
    <property type="project" value="TreeGrafter"/>
</dbReference>
<dbReference type="GO" id="GO:0008233">
    <property type="term" value="F:peptidase activity"/>
    <property type="evidence" value="ECO:0007669"/>
    <property type="project" value="UniProtKB-KW"/>
</dbReference>
<dbReference type="GO" id="GO:0048513">
    <property type="term" value="P:animal organ development"/>
    <property type="evidence" value="ECO:0007669"/>
    <property type="project" value="UniProtKB-ARBA"/>
</dbReference>
<dbReference type="GO" id="GO:0048468">
    <property type="term" value="P:cell development"/>
    <property type="evidence" value="ECO:0007669"/>
    <property type="project" value="UniProtKB-ARBA"/>
</dbReference>
<dbReference type="GO" id="GO:0001708">
    <property type="term" value="P:cell fate specification"/>
    <property type="evidence" value="ECO:0007669"/>
    <property type="project" value="TreeGrafter"/>
</dbReference>
<dbReference type="GO" id="GO:0007267">
    <property type="term" value="P:cell-cell signaling"/>
    <property type="evidence" value="ECO:0007669"/>
    <property type="project" value="InterPro"/>
</dbReference>
<dbReference type="GO" id="GO:0007417">
    <property type="term" value="P:central nervous system development"/>
    <property type="evidence" value="ECO:0007669"/>
    <property type="project" value="UniProtKB-ARBA"/>
</dbReference>
<dbReference type="GO" id="GO:0030182">
    <property type="term" value="P:neuron differentiation"/>
    <property type="evidence" value="ECO:0007669"/>
    <property type="project" value="UniProtKB-ARBA"/>
</dbReference>
<dbReference type="GO" id="GO:0006508">
    <property type="term" value="P:proteolysis"/>
    <property type="evidence" value="ECO:0007669"/>
    <property type="project" value="UniProtKB-KW"/>
</dbReference>
<dbReference type="GO" id="GO:0010468">
    <property type="term" value="P:regulation of gene expression"/>
    <property type="evidence" value="ECO:0007669"/>
    <property type="project" value="TreeGrafter"/>
</dbReference>
<dbReference type="GO" id="GO:0007224">
    <property type="term" value="P:smoothened signaling pathway"/>
    <property type="evidence" value="ECO:0007669"/>
    <property type="project" value="TreeGrafter"/>
</dbReference>
<dbReference type="GO" id="GO:0009888">
    <property type="term" value="P:tissue development"/>
    <property type="evidence" value="ECO:0007669"/>
    <property type="project" value="UniProtKB-ARBA"/>
</dbReference>
<dbReference type="Gene3D" id="3.30.1380.10">
    <property type="match status" value="1"/>
</dbReference>
<dbReference type="InterPro" id="IPR001657">
    <property type="entry name" value="Hedgehog"/>
</dbReference>
<dbReference type="InterPro" id="IPR009045">
    <property type="entry name" value="Hedgehog_sig/DD-Pept_Zn-bd_sf"/>
</dbReference>
<dbReference type="InterPro" id="IPR050387">
    <property type="entry name" value="Hedgehog_Signaling"/>
</dbReference>
<dbReference type="InterPro" id="IPR000320">
    <property type="entry name" value="Hedgehog_signalling_dom"/>
</dbReference>
<dbReference type="PANTHER" id="PTHR11889">
    <property type="entry name" value="HEDGEHOG"/>
    <property type="match status" value="1"/>
</dbReference>
<dbReference type="PANTHER" id="PTHR11889:SF36">
    <property type="entry name" value="SONIC HEDGEHOG PROTEIN"/>
    <property type="match status" value="1"/>
</dbReference>
<dbReference type="Pfam" id="PF01085">
    <property type="entry name" value="HH_signal"/>
    <property type="match status" value="1"/>
</dbReference>
<dbReference type="PRINTS" id="PR00632">
    <property type="entry name" value="SONICHHOG"/>
</dbReference>
<dbReference type="SUPFAM" id="SSF55166">
    <property type="entry name" value="Hedgehog/DD-peptidase"/>
    <property type="match status" value="1"/>
</dbReference>
<comment type="function">
    <text evidence="1">Intercellular signal essential for a variety of patterning events during development. Signal produced by the notochord that induces somite patterning, dorso-ventral patterning of the brain and early patterning of the developing eyes. Displays floor plate-inducing activity. Binds to the patched (PTC) receptor, which functions in association with smoothened (SMO), to activate the transcription of target genes. In the absence of SHH, PTC represses the constitutive signaling activity of SMO (By similarity).</text>
</comment>
<comment type="subunit">
    <text evidence="1">N-product is active as a multimer.</text>
</comment>
<comment type="subcellular location">
    <subcellularLocation>
        <location evidence="1">Secreted</location>
    </subcellularLocation>
    <subcellularLocation>
        <location evidence="1">Cell membrane</location>
    </subcellularLocation>
    <text evidence="1">Sonic hedgehog protein C-product: Secreted, extracellular space. Sonic hedgehog protein N-product: Cell membrane; Lipid-anchor. The C-terminal peptide diffuses from the cell, while the N-product either remains associated with lipid rafts at the cell surface, or forms freely diffusible active multimers with its hydrophobic lipid-modified N- and C-termini buried inside.</text>
</comment>
<comment type="domain">
    <text evidence="1">The sonic hedgehog protein N-product binds calcium and zinc ions; this stabilizes the protein fold and is essential for protein-protein interactions mediated by this domain.</text>
</comment>
<comment type="PTM">
    <text>The C-terminal domain displays an autoproteolysis activity and a cholesterol transferase activity. Both activities result in the cleavage of the full-length protein and covalent attachment of a cholesterol moiety to the C-terminal of the newly generated N-terminal fragment (N-product). The N-product is the active species in both local and long-range signaling, whereas the C-product has no signaling activity.</text>
</comment>
<comment type="PTM">
    <text evidence="1">Cholesterylation is required for N-product targeting to lipid rafts and multimerization.</text>
</comment>
<comment type="PTM">
    <text evidence="1">N-palmitoylation is required for N-product multimerization and full activity.</text>
</comment>
<comment type="similarity">
    <text evidence="3">Belongs to the hedgehog family.</text>
</comment>